<name>ZSWM5_MOUSE</name>
<reference key="1">
    <citation type="journal article" date="2003" name="DNA Res.">
        <title>Prediction of the coding sequences of mouse homologues of KIAA gene: II. The complete nucleotide sequences of 400 mouse KIAA-homologous cDNAs identified by screening of terminal sequences of cDNA clones randomly sampled from size-fractionated libraries.</title>
        <authorList>
            <person name="Okazaki N."/>
            <person name="Kikuno R."/>
            <person name="Ohara R."/>
            <person name="Inamoto S."/>
            <person name="Aizawa H."/>
            <person name="Yuasa S."/>
            <person name="Nakajima D."/>
            <person name="Nagase T."/>
            <person name="Ohara O."/>
            <person name="Koga H."/>
        </authorList>
    </citation>
    <scope>NUCLEOTIDE SEQUENCE [LARGE SCALE MRNA]</scope>
    <source>
        <tissue>Brain</tissue>
    </source>
</reference>
<keyword id="KW-0479">Metal-binding</keyword>
<keyword id="KW-1185">Reference proteome</keyword>
<keyword id="KW-0862">Zinc</keyword>
<keyword id="KW-0863">Zinc-finger</keyword>
<dbReference type="EMBL" id="AK122519">
    <property type="protein sequence ID" value="BAC65801.1"/>
    <property type="molecule type" value="mRNA"/>
</dbReference>
<dbReference type="CCDS" id="CCDS18520.1"/>
<dbReference type="RefSeq" id="NP_001025083.1">
    <property type="nucleotide sequence ID" value="NM_001029912.3"/>
</dbReference>
<dbReference type="BioGRID" id="216770">
    <property type="interactions" value="1"/>
</dbReference>
<dbReference type="FunCoup" id="Q80TC6">
    <property type="interactions" value="44"/>
</dbReference>
<dbReference type="STRING" id="10090.ENSMUSP00000049474"/>
<dbReference type="GlyGen" id="Q80TC6">
    <property type="glycosylation" value="1 site"/>
</dbReference>
<dbReference type="iPTMnet" id="Q80TC6"/>
<dbReference type="PhosphoSitePlus" id="Q80TC6"/>
<dbReference type="PaxDb" id="10090-ENSMUSP00000049474"/>
<dbReference type="ProteomicsDB" id="275317"/>
<dbReference type="Antibodypedia" id="2902">
    <property type="antibodies" value="69 antibodies from 15 providers"/>
</dbReference>
<dbReference type="Ensembl" id="ENSMUST00000044823.4">
    <property type="protein sequence ID" value="ENSMUSP00000049474.4"/>
    <property type="gene ID" value="ENSMUSG00000033948.4"/>
</dbReference>
<dbReference type="GeneID" id="74464"/>
<dbReference type="KEGG" id="mmu:74464"/>
<dbReference type="UCSC" id="uc008uhq.1">
    <property type="organism name" value="mouse"/>
</dbReference>
<dbReference type="AGR" id="MGI:1921714"/>
<dbReference type="CTD" id="57643"/>
<dbReference type="MGI" id="MGI:1921714">
    <property type="gene designation" value="Zswim5"/>
</dbReference>
<dbReference type="VEuPathDB" id="HostDB:ENSMUSG00000033948"/>
<dbReference type="eggNOG" id="KOG3615">
    <property type="taxonomic scope" value="Eukaryota"/>
</dbReference>
<dbReference type="GeneTree" id="ENSGT00940000158362"/>
<dbReference type="HOGENOM" id="CLU_005301_1_0_1"/>
<dbReference type="InParanoid" id="Q80TC6"/>
<dbReference type="OMA" id="WIGHALD"/>
<dbReference type="OrthoDB" id="10013584at2759"/>
<dbReference type="PhylomeDB" id="Q80TC6"/>
<dbReference type="TreeFam" id="TF324881"/>
<dbReference type="BioGRID-ORCS" id="74464">
    <property type="hits" value="1 hit in 77 CRISPR screens"/>
</dbReference>
<dbReference type="ChiTaRS" id="Zswim5">
    <property type="organism name" value="mouse"/>
</dbReference>
<dbReference type="PRO" id="PR:Q80TC6"/>
<dbReference type="Proteomes" id="UP000000589">
    <property type="component" value="Chromosome 4"/>
</dbReference>
<dbReference type="RNAct" id="Q80TC6">
    <property type="molecule type" value="protein"/>
</dbReference>
<dbReference type="Bgee" id="ENSMUSG00000033948">
    <property type="expression patterns" value="Expressed in medial ganglionic eminence and 137 other cell types or tissues"/>
</dbReference>
<dbReference type="GO" id="GO:0008270">
    <property type="term" value="F:zinc ion binding"/>
    <property type="evidence" value="ECO:0007669"/>
    <property type="project" value="UniProtKB-KW"/>
</dbReference>
<dbReference type="InterPro" id="IPR007527">
    <property type="entry name" value="Znf_SWIM"/>
</dbReference>
<dbReference type="InterPro" id="IPR048370">
    <property type="entry name" value="ZSWIM4-8_C"/>
</dbReference>
<dbReference type="PANTHER" id="PTHR22619">
    <property type="entry name" value="ZINC FINGER SWIM DOMAIN CONTAINING PROTEIN 4, 5, 6"/>
    <property type="match status" value="1"/>
</dbReference>
<dbReference type="PANTHER" id="PTHR22619:SF2">
    <property type="entry name" value="ZINC FINGER SWIM DOMAIN-CONTAINING PROTEIN 5"/>
    <property type="match status" value="1"/>
</dbReference>
<dbReference type="Pfam" id="PF21055">
    <property type="entry name" value="ZSWIM4-8_C"/>
    <property type="match status" value="1"/>
</dbReference>
<dbReference type="PROSITE" id="PS50966">
    <property type="entry name" value="ZF_SWIM"/>
    <property type="match status" value="1"/>
</dbReference>
<accession>Q80TC6</accession>
<feature type="chain" id="PRO_0000223104" description="Zinc finger SWIM domain-containing protein 5">
    <location>
        <begin position="1"/>
        <end position="1188"/>
    </location>
</feature>
<feature type="zinc finger region" description="SWIM-type" evidence="1">
    <location>
        <begin position="222"/>
        <end position="259"/>
    </location>
</feature>
<feature type="region of interest" description="Disordered" evidence="2">
    <location>
        <begin position="1"/>
        <end position="46"/>
    </location>
</feature>
<feature type="region of interest" description="Disordered" evidence="2">
    <location>
        <begin position="123"/>
        <end position="171"/>
    </location>
</feature>
<feature type="compositionally biased region" description="Basic and acidic residues" evidence="2">
    <location>
        <begin position="1"/>
        <end position="10"/>
    </location>
</feature>
<feature type="compositionally biased region" description="Low complexity" evidence="2">
    <location>
        <begin position="126"/>
        <end position="136"/>
    </location>
</feature>
<feature type="compositionally biased region" description="Low complexity" evidence="2">
    <location>
        <begin position="146"/>
        <end position="155"/>
    </location>
</feature>
<feature type="compositionally biased region" description="Gly residues" evidence="2">
    <location>
        <begin position="156"/>
        <end position="171"/>
    </location>
</feature>
<gene>
    <name type="primary">Zswim5</name>
    <name type="synonym">Kiaa1511</name>
</gene>
<proteinExistence type="evidence at transcript level"/>
<sequence length="1188" mass="130927">MAEGGEREELLSPPPISPAKRLCSWPSPQAHHPRGTPGAAGGGAGGGGGGCLAPGARPHLQPESLLDCAAKTVAEKWAYERVEERFERIPEPVQRRIVYWSFPRNEREICMYSSFQYRGGPGAGAAAGAAGASPVEEGPPPPPGAAAPAGSAPGAAGAGSSPGLGAGTGTASGGCGGGEGLPFRRGIRLLDSGSVENVLQVGFHLSGTVTEPAMASEPAVTYKVAISFDRCKITSVSCGCGNKDIFYCAHVVALSLYRIRKPDQVKLRLPISETLFQMNRDQLQKFIQYLITAHHTEVLPTAQKLADEILSSNSEINQVNGAPDPTAGASIDDENCWHLDEEQVKEQVKLFLSQGGYYGSGKQLNSMFAKVREMLRMRDSNGARMLTLITEQFMADPRLTLWRQQGTSMTDKCRQLWDELGALWVCIILNPHCKLEEKSCWLQQLQKWSDLDICPLEDGNYGHELPNITNALSQSASHSPDSLSRPRRTVFTRAIEGRELHWQDSHLQRIISSGIYTAPACQRENERLLFNSHGQPLWLEHVPTACARVDALRSHGYPKEALRLTVAIINTLRLQQQRQLEIYKHQKKELLQRGTTTITNLEGWVGHPLDPIGCLFLTLTEACRLNDDSYMEMSDMNESRLPVYQHVPVASGCPNSNESYLSLALEVALMGMGQQRVMPEGLYAQDKVCRNEEQLLSQLQELQLDDELVQTLRKQCILLLEGGPFSGLGEVIHRESVPMHTFAKYLFSALLPHDPDLSYKLALRAMRLPVLENSSSAGDTSHPHHMVSVVPSRYPRWFTLGHLESQQCELASTMLTAAKGDTLRLRTLLEAIQKHIHSPSLIFKLAQDAFKIATPTDSSTDGTLLNVALELGLQVMRMTLSTLNWRRREMVRWLVTCATEVGVRALVSILQSWYTLFTPTEATSIVAATAVSHTTILRLSLDYPQREELASCARTLALQCAMKDPQSCALSALTLCEKDHIAFEAAYQIAIDAAAGGMTHSQLFTIARYMELRGYPLRAFKLASLAMSHLNLAYNQDTHPAINDVLWACALSHSLGKNELAALIPLVVKSVHCATVLSDILRRCTVTAPGLAGIPGRRSSGKLMSTDKAPLRQLLDATINAYINTTHSRLTHISPRHYGEFIEFLSKARETFLLPQDGHLQFAQFIDNLKQIYKGKKKLMLLVRERFG</sequence>
<organism>
    <name type="scientific">Mus musculus</name>
    <name type="common">Mouse</name>
    <dbReference type="NCBI Taxonomy" id="10090"/>
    <lineage>
        <taxon>Eukaryota</taxon>
        <taxon>Metazoa</taxon>
        <taxon>Chordata</taxon>
        <taxon>Craniata</taxon>
        <taxon>Vertebrata</taxon>
        <taxon>Euteleostomi</taxon>
        <taxon>Mammalia</taxon>
        <taxon>Eutheria</taxon>
        <taxon>Euarchontoglires</taxon>
        <taxon>Glires</taxon>
        <taxon>Rodentia</taxon>
        <taxon>Myomorpha</taxon>
        <taxon>Muroidea</taxon>
        <taxon>Muridae</taxon>
        <taxon>Murinae</taxon>
        <taxon>Mus</taxon>
        <taxon>Mus</taxon>
    </lineage>
</organism>
<protein>
    <recommendedName>
        <fullName>Zinc finger SWIM domain-containing protein 5</fullName>
    </recommendedName>
</protein>
<evidence type="ECO:0000255" key="1">
    <source>
        <dbReference type="PROSITE-ProRule" id="PRU00325"/>
    </source>
</evidence>
<evidence type="ECO:0000256" key="2">
    <source>
        <dbReference type="SAM" id="MobiDB-lite"/>
    </source>
</evidence>